<evidence type="ECO:0000250" key="1"/>
<evidence type="ECO:0000250" key="2">
    <source>
        <dbReference type="UniProtKB" id="Q91XQ0"/>
    </source>
</evidence>
<evidence type="ECO:0000255" key="3"/>
<evidence type="ECO:0000269" key="4">
    <source>
    </source>
</evidence>
<evidence type="ECO:0000269" key="5">
    <source>
    </source>
</evidence>
<evidence type="ECO:0000269" key="6">
    <source>
    </source>
</evidence>
<evidence type="ECO:0000269" key="7">
    <source>
    </source>
</evidence>
<evidence type="ECO:0000269" key="8">
    <source>
    </source>
</evidence>
<evidence type="ECO:0000269" key="9">
    <source>
    </source>
</evidence>
<evidence type="ECO:0000305" key="10"/>
<evidence type="ECO:0000312" key="11">
    <source>
        <dbReference type="HGNC" id="HGNC:2952"/>
    </source>
</evidence>
<evidence type="ECO:0007744" key="12">
    <source>
    </source>
</evidence>
<gene>
    <name evidence="11" type="primary">DNAH8</name>
</gene>
<feature type="chain" id="PRO_0000274044" description="Dynein axonemal heavy chain 8">
    <location>
        <begin position="1"/>
        <end position="4490"/>
    </location>
</feature>
<feature type="region of interest" description="AAA 1" evidence="1">
    <location>
        <begin position="1808"/>
        <end position="2030"/>
    </location>
</feature>
<feature type="region of interest" description="AAA 2" evidence="1">
    <location>
        <begin position="2090"/>
        <end position="2309"/>
    </location>
</feature>
<feature type="region of interest" description="AAA 3" evidence="1">
    <location>
        <begin position="2416"/>
        <end position="2669"/>
    </location>
</feature>
<feature type="region of interest" description="AAA 4" evidence="1">
    <location>
        <begin position="2780"/>
        <end position="3034"/>
    </location>
</feature>
<feature type="region of interest" description="Stalk" evidence="1">
    <location>
        <begin position="3049"/>
        <end position="3346"/>
    </location>
</feature>
<feature type="region of interest" description="AAA 5" evidence="1">
    <location>
        <begin position="3432"/>
        <end position="3662"/>
    </location>
</feature>
<feature type="region of interest" description="AAA 6" evidence="1">
    <location>
        <begin position="3877"/>
        <end position="4091"/>
    </location>
</feature>
<feature type="coiled-coil region" evidence="3">
    <location>
        <begin position="3072"/>
        <end position="3164"/>
    </location>
</feature>
<feature type="coiled-coil region" evidence="3">
    <location>
        <begin position="3290"/>
        <end position="3354"/>
    </location>
</feature>
<feature type="coiled-coil region" evidence="3">
    <location>
        <begin position="3594"/>
        <end position="3630"/>
    </location>
</feature>
<feature type="binding site" evidence="3">
    <location>
        <begin position="1846"/>
        <end position="1853"/>
    </location>
    <ligand>
        <name>ATP</name>
        <dbReference type="ChEBI" id="CHEBI:30616"/>
    </ligand>
</feature>
<feature type="binding site" evidence="3">
    <location>
        <begin position="2128"/>
        <end position="2135"/>
    </location>
    <ligand>
        <name>ATP</name>
        <dbReference type="ChEBI" id="CHEBI:30616"/>
    </ligand>
</feature>
<feature type="modified residue" description="Phosphoserine" evidence="12">
    <location>
        <position position="674"/>
    </location>
</feature>
<feature type="splice variant" id="VSP_022614" description="In isoform 2." evidence="10">
    <location>
        <begin position="1978"/>
        <end position="2013"/>
    </location>
</feature>
<feature type="sequence variant" id="VAR_030171" description="In dbSNP:rs6935293.">
    <original>N</original>
    <variation>S</variation>
    <location>
        <position position="71"/>
    </location>
</feature>
<feature type="sequence variant" id="VAR_030172" description="In dbSNP:rs1738254.">
    <original>G</original>
    <variation>R</variation>
    <location>
        <position position="473"/>
    </location>
</feature>
<feature type="sequence variant" id="VAR_030173" description="In dbSNP:rs3823430." evidence="4">
    <original>I</original>
    <variation>V</variation>
    <location>
        <position position="573"/>
    </location>
</feature>
<feature type="sequence variant" id="VAR_085187" description="Found in a patient with primary ciliary dyskinesia; uncertain significance." evidence="6">
    <location>
        <begin position="590"/>
        <end position="4490"/>
    </location>
</feature>
<feature type="sequence variant" id="VAR_030174" description="In dbSNP:rs1678674.">
    <original>A</original>
    <variation>T</variation>
    <location>
        <position position="727"/>
    </location>
</feature>
<feature type="sequence variant" id="VAR_030175" description="In dbSNP:rs874808." evidence="4">
    <original>G</original>
    <variation>E</variation>
    <location>
        <position position="807"/>
    </location>
</feature>
<feature type="sequence variant" id="VAR_030176" description="In dbSNP:rs9357283." evidence="4">
    <original>E</original>
    <variation>K</variation>
    <location>
        <position position="1202"/>
    </location>
</feature>
<feature type="sequence variant" id="VAR_085188" description="In SPGF46; uncertain significance; dbSNP:rs1563044711." evidence="8">
    <original>K</original>
    <variation>R</variation>
    <location>
        <position position="2013"/>
    </location>
</feature>
<feature type="sequence variant" id="VAR_036213" description="In a colorectal cancer sample; somatic mutation." evidence="5">
    <original>T</original>
    <variation>M</variation>
    <location>
        <position position="2226"/>
    </location>
</feature>
<feature type="sequence variant" id="VAR_030177" description="In dbSNP:rs862432.">
    <original>T</original>
    <variation>N</variation>
    <location>
        <position position="2444"/>
    </location>
</feature>
<feature type="sequence variant" id="VAR_085189" description="In SPGF46; uncertain significance; dbSNP:rs151313083." evidence="8">
    <original>R</original>
    <variation>C</variation>
    <location>
        <position position="2926"/>
    </location>
</feature>
<feature type="sequence variant" id="VAR_085190" description="In dbSNP:rs61757218." evidence="8">
    <original>T</original>
    <variation>M</variation>
    <location>
        <position position="3707"/>
    </location>
</feature>
<feature type="sequence variant" id="VAR_085191" description="In SPGF46; uncertain significance; dbSNP:rs369473998." evidence="8">
    <original>A</original>
    <variation>T</variation>
    <location>
        <position position="4024"/>
    </location>
</feature>
<feature type="sequence variant" id="VAR_030178" description="In dbSNP:rs1537232.">
    <original>T</original>
    <variation>M</variation>
    <location>
        <position position="4106"/>
    </location>
</feature>
<feature type="sequence variant" id="VAR_030179" description="In dbSNP:rs10484847." evidence="4">
    <original>I</original>
    <variation>V</variation>
    <location>
        <position position="4271"/>
    </location>
</feature>
<feature type="sequence conflict" description="In Ref. 1; AAK60620." evidence="10" ref="1">
    <original>A</original>
    <variation>T</variation>
    <location>
        <position position="1622"/>
    </location>
</feature>
<feature type="sequence conflict" description="In Ref. 3; CAB06060." evidence="10" ref="3">
    <original>IFL</original>
    <variation>VFI</variation>
    <location>
        <begin position="1945"/>
        <end position="1947"/>
    </location>
</feature>
<feature type="sequence conflict" description="In Ref. 1; AAK60620." evidence="10" ref="1">
    <original>H</original>
    <variation>R</variation>
    <location>
        <position position="3495"/>
    </location>
</feature>
<feature type="sequence conflict" description="In Ref. 1; AAK60620." evidence="10" ref="1">
    <original>G</original>
    <variation>D</variation>
    <location>
        <position position="4118"/>
    </location>
</feature>
<protein>
    <recommendedName>
        <fullName evidence="10">Dynein axonemal heavy chain 8</fullName>
    </recommendedName>
    <alternativeName>
        <fullName>Axonemal beta dynein heavy chain 8</fullName>
    </alternativeName>
    <alternativeName>
        <fullName>Ciliary dynein heavy chain 8</fullName>
    </alternativeName>
</protein>
<name>DYH8_HUMAN</name>
<accession>Q96JB1</accession>
<accession>O00438</accession>
<accession>Q5JYI2</accession>
<accession>Q5T2M3</accession>
<accession>Q5T2M4</accession>
<accession>Q5TG00</accession>
<accession>Q9UEM4</accession>
<proteinExistence type="evidence at protein level"/>
<dbReference type="EMBL" id="AF356519">
    <property type="protein sequence ID" value="AAK60620.1"/>
    <property type="molecule type" value="mRNA"/>
</dbReference>
<dbReference type="EMBL" id="AL034345">
    <property type="status" value="NOT_ANNOTATED_CDS"/>
    <property type="molecule type" value="Genomic_DNA"/>
</dbReference>
<dbReference type="EMBL" id="AL035555">
    <property type="status" value="NOT_ANNOTATED_CDS"/>
    <property type="molecule type" value="Genomic_DNA"/>
</dbReference>
<dbReference type="EMBL" id="AL035690">
    <property type="status" value="NOT_ANNOTATED_CDS"/>
    <property type="molecule type" value="Genomic_DNA"/>
</dbReference>
<dbReference type="EMBL" id="AL353700">
    <property type="status" value="NOT_ANNOTATED_CDS"/>
    <property type="molecule type" value="Genomic_DNA"/>
</dbReference>
<dbReference type="EMBL" id="AL391415">
    <property type="status" value="NOT_ANNOTATED_CDS"/>
    <property type="molecule type" value="Genomic_DNA"/>
</dbReference>
<dbReference type="EMBL" id="Z83806">
    <property type="protein sequence ID" value="CAB06060.1"/>
    <property type="molecule type" value="mRNA"/>
</dbReference>
<dbReference type="EMBL" id="AJ132091">
    <property type="protein sequence ID" value="CAA10564.1"/>
    <property type="molecule type" value="mRNA"/>
</dbReference>
<dbReference type="CCDS" id="CCDS4838.1">
    <molecule id="Q96JB1-1"/>
</dbReference>
<dbReference type="RefSeq" id="NP_001193856.1">
    <property type="nucleotide sequence ID" value="NM_001206927.1"/>
</dbReference>
<dbReference type="RefSeq" id="NP_001362.2">
    <molecule id="Q96JB1-1"/>
    <property type="nucleotide sequence ID" value="NM_001371.4"/>
</dbReference>
<dbReference type="RefSeq" id="XP_011512623.1">
    <property type="nucleotide sequence ID" value="XM_011514321.1"/>
</dbReference>
<dbReference type="SMR" id="Q96JB1"/>
<dbReference type="BioGRID" id="108108">
    <property type="interactions" value="19"/>
</dbReference>
<dbReference type="FunCoup" id="Q96JB1">
    <property type="interactions" value="91"/>
</dbReference>
<dbReference type="IntAct" id="Q96JB1">
    <property type="interactions" value="3"/>
</dbReference>
<dbReference type="STRING" id="9606.ENSP00000333363"/>
<dbReference type="CarbonylDB" id="Q96JB1"/>
<dbReference type="GlyGen" id="Q96JB1">
    <property type="glycosylation" value="4 sites, 1 O-linked glycan (1 site)"/>
</dbReference>
<dbReference type="iPTMnet" id="Q96JB1"/>
<dbReference type="PhosphoSitePlus" id="Q96JB1"/>
<dbReference type="SwissPalm" id="Q96JB1"/>
<dbReference type="BioMuta" id="DNAH8"/>
<dbReference type="DMDM" id="124007137"/>
<dbReference type="jPOST" id="Q96JB1"/>
<dbReference type="MassIVE" id="Q96JB1"/>
<dbReference type="PaxDb" id="9606-ENSP00000333363"/>
<dbReference type="PeptideAtlas" id="Q96JB1"/>
<dbReference type="ProteomicsDB" id="76924">
    <molecule id="Q96JB1-1"/>
</dbReference>
<dbReference type="ProteomicsDB" id="76925">
    <molecule id="Q96JB1-2"/>
</dbReference>
<dbReference type="Antibodypedia" id="29878">
    <property type="antibodies" value="48 antibodies from 16 providers"/>
</dbReference>
<dbReference type="DNASU" id="1769"/>
<dbReference type="Ensembl" id="ENST00000359357.7">
    <molecule id="Q96JB1-1"/>
    <property type="protein sequence ID" value="ENSP00000352312.3"/>
    <property type="gene ID" value="ENSG00000124721.18"/>
</dbReference>
<dbReference type="GeneID" id="1769"/>
<dbReference type="KEGG" id="hsa:1769"/>
<dbReference type="UCSC" id="uc003ooe.3">
    <molecule id="Q96JB1-1"/>
    <property type="organism name" value="human"/>
</dbReference>
<dbReference type="AGR" id="HGNC:2952"/>
<dbReference type="CTD" id="1769"/>
<dbReference type="DisGeNET" id="1769"/>
<dbReference type="GeneCards" id="DNAH8"/>
<dbReference type="GeneReviews" id="DNAH8"/>
<dbReference type="HGNC" id="HGNC:2952">
    <property type="gene designation" value="DNAH8"/>
</dbReference>
<dbReference type="HPA" id="ENSG00000124721">
    <property type="expression patterns" value="Tissue enhanced (epididymis, prostate, testis)"/>
</dbReference>
<dbReference type="MalaCards" id="DNAH8"/>
<dbReference type="MIM" id="603337">
    <property type="type" value="gene"/>
</dbReference>
<dbReference type="MIM" id="619095">
    <property type="type" value="phenotype"/>
</dbReference>
<dbReference type="neXtProt" id="NX_Q96JB1"/>
<dbReference type="OpenTargets" id="ENSG00000124721"/>
<dbReference type="PharmGKB" id="PA27405"/>
<dbReference type="VEuPathDB" id="HostDB:ENSG00000124721"/>
<dbReference type="eggNOG" id="KOG3595">
    <property type="taxonomic scope" value="Eukaryota"/>
</dbReference>
<dbReference type="GeneTree" id="ENSGT00940000158992"/>
<dbReference type="HOGENOM" id="CLU_000038_9_1_1"/>
<dbReference type="InParanoid" id="Q96JB1"/>
<dbReference type="OrthoDB" id="447173at2759"/>
<dbReference type="PAN-GO" id="Q96JB1">
    <property type="GO annotations" value="6 GO annotations based on evolutionary models"/>
</dbReference>
<dbReference type="PhylomeDB" id="Q96JB1"/>
<dbReference type="TreeFam" id="TF316836"/>
<dbReference type="PathwayCommons" id="Q96JB1"/>
<dbReference type="SignaLink" id="Q96JB1"/>
<dbReference type="BioGRID-ORCS" id="1769">
    <property type="hits" value="7 hits in 392 CRISPR screens"/>
</dbReference>
<dbReference type="ChiTaRS" id="DNAH8">
    <property type="organism name" value="human"/>
</dbReference>
<dbReference type="GenomeRNAi" id="1769"/>
<dbReference type="Pharos" id="Q96JB1">
    <property type="development level" value="Tbio"/>
</dbReference>
<dbReference type="PRO" id="PR:Q96JB1"/>
<dbReference type="Proteomes" id="UP000005640">
    <property type="component" value="Chromosome 6"/>
</dbReference>
<dbReference type="RNAct" id="Q96JB1">
    <property type="molecule type" value="protein"/>
</dbReference>
<dbReference type="Bgee" id="ENSG00000124721">
    <property type="expression patterns" value="Expressed in sperm and 60 other cell types or tissues"/>
</dbReference>
<dbReference type="ExpressionAtlas" id="Q96JB1">
    <property type="expression patterns" value="baseline and differential"/>
</dbReference>
<dbReference type="GO" id="GO:0005858">
    <property type="term" value="C:axonemal dynein complex"/>
    <property type="evidence" value="ECO:0000303"/>
    <property type="project" value="UniProtKB"/>
</dbReference>
<dbReference type="GO" id="GO:0005930">
    <property type="term" value="C:axoneme"/>
    <property type="evidence" value="ECO:0000314"/>
    <property type="project" value="UniProtKB"/>
</dbReference>
<dbReference type="GO" id="GO:0005874">
    <property type="term" value="C:microtubule"/>
    <property type="evidence" value="ECO:0007669"/>
    <property type="project" value="UniProtKB-KW"/>
</dbReference>
<dbReference type="GO" id="GO:0036157">
    <property type="term" value="C:outer dynein arm"/>
    <property type="evidence" value="ECO:0000318"/>
    <property type="project" value="GO_Central"/>
</dbReference>
<dbReference type="GO" id="GO:0036126">
    <property type="term" value="C:sperm flagellum"/>
    <property type="evidence" value="ECO:0000314"/>
    <property type="project" value="UniProtKB"/>
</dbReference>
<dbReference type="GO" id="GO:0005524">
    <property type="term" value="F:ATP binding"/>
    <property type="evidence" value="ECO:0007669"/>
    <property type="project" value="UniProtKB-KW"/>
</dbReference>
<dbReference type="GO" id="GO:0016887">
    <property type="term" value="F:ATP hydrolysis activity"/>
    <property type="evidence" value="ECO:0007669"/>
    <property type="project" value="InterPro"/>
</dbReference>
<dbReference type="GO" id="GO:0045505">
    <property type="term" value="F:dynein intermediate chain binding"/>
    <property type="evidence" value="ECO:0000318"/>
    <property type="project" value="GO_Central"/>
</dbReference>
<dbReference type="GO" id="GO:0051959">
    <property type="term" value="F:dynein light intermediate chain binding"/>
    <property type="evidence" value="ECO:0000318"/>
    <property type="project" value="GO_Central"/>
</dbReference>
<dbReference type="GO" id="GO:0003777">
    <property type="term" value="F:microtubule motor activity"/>
    <property type="evidence" value="ECO:0000315"/>
    <property type="project" value="UniProtKB"/>
</dbReference>
<dbReference type="GO" id="GO:0008569">
    <property type="term" value="F:minus-end-directed microtubule motor activity"/>
    <property type="evidence" value="ECO:0000318"/>
    <property type="project" value="GO_Central"/>
</dbReference>
<dbReference type="GO" id="GO:0060294">
    <property type="term" value="P:cilium movement involved in cell motility"/>
    <property type="evidence" value="ECO:0000318"/>
    <property type="project" value="GO_Central"/>
</dbReference>
<dbReference type="GO" id="GO:0060285">
    <property type="term" value="P:cilium-dependent cell motility"/>
    <property type="evidence" value="ECO:0000303"/>
    <property type="project" value="UniProtKB"/>
</dbReference>
<dbReference type="GO" id="GO:0036158">
    <property type="term" value="P:outer dynein arm assembly"/>
    <property type="evidence" value="ECO:0000318"/>
    <property type="project" value="GO_Central"/>
</dbReference>
<dbReference type="FunFam" id="3.40.50.300:FF:001221">
    <property type="entry name" value="Axonemal dynein heavy chain 8"/>
    <property type="match status" value="1"/>
</dbReference>
<dbReference type="FunFam" id="1.10.8.1220:FF:000001">
    <property type="entry name" value="Dynein axonemal heavy chain 5"/>
    <property type="match status" value="1"/>
</dbReference>
<dbReference type="FunFam" id="1.10.8.710:FF:000003">
    <property type="entry name" value="Dynein axonemal heavy chain 5"/>
    <property type="match status" value="1"/>
</dbReference>
<dbReference type="FunFam" id="1.20.58.1120:FF:000004">
    <property type="entry name" value="Dynein axonemal heavy chain 5"/>
    <property type="match status" value="1"/>
</dbReference>
<dbReference type="FunFam" id="1.20.920.20:FF:000004">
    <property type="entry name" value="Dynein axonemal heavy chain 5"/>
    <property type="match status" value="1"/>
</dbReference>
<dbReference type="FunFam" id="1.20.920.30:FF:000004">
    <property type="entry name" value="Dynein axonemal heavy chain 5"/>
    <property type="match status" value="1"/>
</dbReference>
<dbReference type="FunFam" id="3.20.180.20:FF:000001">
    <property type="entry name" value="Dynein axonemal heavy chain 5"/>
    <property type="match status" value="1"/>
</dbReference>
<dbReference type="FunFam" id="3.40.50.300:FF:000543">
    <property type="entry name" value="Dynein axonemal heavy chain 5"/>
    <property type="match status" value="1"/>
</dbReference>
<dbReference type="FunFam" id="3.40.50.300:FF:002141">
    <property type="entry name" value="Dynein heavy chain"/>
    <property type="match status" value="1"/>
</dbReference>
<dbReference type="FunFam" id="1.10.472.130:FF:000009">
    <property type="entry name" value="Dynein heavy chain 5, axonemal"/>
    <property type="match status" value="1"/>
</dbReference>
<dbReference type="FunFam" id="1.10.8.720:FF:000004">
    <property type="entry name" value="Dynein heavy chain 5, axonemal"/>
    <property type="match status" value="1"/>
</dbReference>
<dbReference type="FunFam" id="1.20.1270.280:FF:000002">
    <property type="entry name" value="Dynein heavy chain 5, axonemal"/>
    <property type="match status" value="1"/>
</dbReference>
<dbReference type="FunFam" id="3.10.490.20:FF:000003">
    <property type="entry name" value="Dynein heavy chain 5, axonemal"/>
    <property type="match status" value="1"/>
</dbReference>
<dbReference type="FunFam" id="3.40.50.300:FF:000044">
    <property type="entry name" value="Dynein heavy chain 5, axonemal"/>
    <property type="match status" value="1"/>
</dbReference>
<dbReference type="FunFam" id="1.10.287.2620:FF:000003">
    <property type="entry name" value="Dynein, axonemal, heavy chain 5"/>
    <property type="match status" value="1"/>
</dbReference>
<dbReference type="FunFam" id="1.20.140.100:FF:000003">
    <property type="entry name" value="Dynein, axonemal, heavy chain 5"/>
    <property type="match status" value="1"/>
</dbReference>
<dbReference type="FunFam" id="3.40.50.300:FF:000049">
    <property type="entry name" value="Dynein, axonemal, heavy chain 5"/>
    <property type="match status" value="1"/>
</dbReference>
<dbReference type="FunFam" id="3.40.50.300:FF:000320">
    <property type="entry name" value="Dynein, axonemal, heavy chain 5"/>
    <property type="match status" value="1"/>
</dbReference>
<dbReference type="Gene3D" id="1.10.287.2620">
    <property type="match status" value="1"/>
</dbReference>
<dbReference type="Gene3D" id="1.10.472.130">
    <property type="match status" value="1"/>
</dbReference>
<dbReference type="Gene3D" id="1.10.8.1220">
    <property type="match status" value="1"/>
</dbReference>
<dbReference type="Gene3D" id="1.10.8.710">
    <property type="match status" value="1"/>
</dbReference>
<dbReference type="Gene3D" id="1.20.1270.280">
    <property type="match status" value="1"/>
</dbReference>
<dbReference type="Gene3D" id="1.20.58.1120">
    <property type="match status" value="1"/>
</dbReference>
<dbReference type="Gene3D" id="1.20.920.20">
    <property type="match status" value="1"/>
</dbReference>
<dbReference type="Gene3D" id="1.20.920.30">
    <property type="match status" value="1"/>
</dbReference>
<dbReference type="Gene3D" id="3.10.490.20">
    <property type="match status" value="1"/>
</dbReference>
<dbReference type="Gene3D" id="6.10.140.1060">
    <property type="match status" value="1"/>
</dbReference>
<dbReference type="Gene3D" id="1.20.140.100">
    <property type="entry name" value="Dynein heavy chain, N-terminal domain 2"/>
    <property type="match status" value="1"/>
</dbReference>
<dbReference type="Gene3D" id="3.20.180.20">
    <property type="entry name" value="Dynein heavy chain, N-terminal domain 2"/>
    <property type="match status" value="1"/>
</dbReference>
<dbReference type="Gene3D" id="3.40.50.300">
    <property type="entry name" value="P-loop containing nucleotide triphosphate hydrolases"/>
    <property type="match status" value="5"/>
</dbReference>
<dbReference type="Gene3D" id="1.10.8.720">
    <property type="entry name" value="Region D6 of dynein motor"/>
    <property type="match status" value="1"/>
</dbReference>
<dbReference type="InterPro" id="IPR003593">
    <property type="entry name" value="AAA+_ATPase"/>
</dbReference>
<dbReference type="InterPro" id="IPR035699">
    <property type="entry name" value="AAA_6"/>
</dbReference>
<dbReference type="InterPro" id="IPR035706">
    <property type="entry name" value="AAA_9"/>
</dbReference>
<dbReference type="InterPro" id="IPR041658">
    <property type="entry name" value="AAA_lid_11"/>
</dbReference>
<dbReference type="InterPro" id="IPR042219">
    <property type="entry name" value="AAA_lid_11_sf"/>
</dbReference>
<dbReference type="InterPro" id="IPR026983">
    <property type="entry name" value="DHC"/>
</dbReference>
<dbReference type="InterPro" id="IPR041589">
    <property type="entry name" value="DNAH3_AAA_lid_1"/>
</dbReference>
<dbReference type="InterPro" id="IPR056759">
    <property type="entry name" value="DYH2-5-8_CC"/>
</dbReference>
<dbReference type="InterPro" id="IPR042222">
    <property type="entry name" value="Dynein_2_N"/>
</dbReference>
<dbReference type="InterPro" id="IPR043157">
    <property type="entry name" value="Dynein_AAA1S"/>
</dbReference>
<dbReference type="InterPro" id="IPR041466">
    <property type="entry name" value="Dynein_AAA5_ext"/>
</dbReference>
<dbReference type="InterPro" id="IPR041228">
    <property type="entry name" value="Dynein_C"/>
</dbReference>
<dbReference type="InterPro" id="IPR043160">
    <property type="entry name" value="Dynein_C_barrel"/>
</dbReference>
<dbReference type="InterPro" id="IPR024743">
    <property type="entry name" value="Dynein_HC_stalk"/>
</dbReference>
<dbReference type="InterPro" id="IPR024317">
    <property type="entry name" value="Dynein_heavy_chain_D4_dom"/>
</dbReference>
<dbReference type="InterPro" id="IPR004273">
    <property type="entry name" value="Dynein_heavy_D6_P-loop"/>
</dbReference>
<dbReference type="InterPro" id="IPR013602">
    <property type="entry name" value="Dynein_heavy_linker"/>
</dbReference>
<dbReference type="InterPro" id="IPR013594">
    <property type="entry name" value="Dynein_heavy_tail"/>
</dbReference>
<dbReference type="InterPro" id="IPR042228">
    <property type="entry name" value="Dynein_linker_3"/>
</dbReference>
<dbReference type="InterPro" id="IPR027417">
    <property type="entry name" value="P-loop_NTPase"/>
</dbReference>
<dbReference type="PANTHER" id="PTHR46532:SF11">
    <property type="entry name" value="DYNEIN AXONEMAL HEAVY CHAIN 12"/>
    <property type="match status" value="1"/>
</dbReference>
<dbReference type="PANTHER" id="PTHR46532">
    <property type="entry name" value="MALE FERTILITY FACTOR KL5"/>
    <property type="match status" value="1"/>
</dbReference>
<dbReference type="Pfam" id="PF12774">
    <property type="entry name" value="AAA_6"/>
    <property type="match status" value="1"/>
</dbReference>
<dbReference type="Pfam" id="PF12775">
    <property type="entry name" value="AAA_7"/>
    <property type="match status" value="1"/>
</dbReference>
<dbReference type="Pfam" id="PF12780">
    <property type="entry name" value="AAA_8"/>
    <property type="match status" value="1"/>
</dbReference>
<dbReference type="Pfam" id="PF12781">
    <property type="entry name" value="AAA_9"/>
    <property type="match status" value="1"/>
</dbReference>
<dbReference type="Pfam" id="PF17857">
    <property type="entry name" value="AAA_lid_1"/>
    <property type="match status" value="1"/>
</dbReference>
<dbReference type="Pfam" id="PF18198">
    <property type="entry name" value="AAA_lid_11"/>
    <property type="match status" value="1"/>
</dbReference>
<dbReference type="Pfam" id="PF08385">
    <property type="entry name" value="DHC_N1"/>
    <property type="match status" value="1"/>
</dbReference>
<dbReference type="Pfam" id="PF08393">
    <property type="entry name" value="DHC_N2"/>
    <property type="match status" value="1"/>
</dbReference>
<dbReference type="Pfam" id="PF25007">
    <property type="entry name" value="DYH2-5-8_CC"/>
    <property type="match status" value="1"/>
</dbReference>
<dbReference type="Pfam" id="PF17852">
    <property type="entry name" value="Dynein_AAA_lid"/>
    <property type="match status" value="1"/>
</dbReference>
<dbReference type="Pfam" id="PF18199">
    <property type="entry name" value="Dynein_C"/>
    <property type="match status" value="1"/>
</dbReference>
<dbReference type="Pfam" id="PF03028">
    <property type="entry name" value="Dynein_heavy"/>
    <property type="match status" value="1"/>
</dbReference>
<dbReference type="Pfam" id="PF12777">
    <property type="entry name" value="MT"/>
    <property type="match status" value="1"/>
</dbReference>
<dbReference type="SMART" id="SM00382">
    <property type="entry name" value="AAA"/>
    <property type="match status" value="3"/>
</dbReference>
<dbReference type="SUPFAM" id="SSF52540">
    <property type="entry name" value="P-loop containing nucleoside triphosphate hydrolases"/>
    <property type="match status" value="4"/>
</dbReference>
<comment type="function">
    <text evidence="8">Force generating protein component of the outer dynein arms (ODAs) in the sperm flagellum. Produces force towards the minus ends of microtubules. Dynein has ATPase activity; the force-producing power stroke is thought to occur on release of ADP. Involved in sperm motility; implicated in sperm flagellar assembly.</text>
</comment>
<comment type="subunit">
    <text>Consists of at least two heavy chains and a number of intermediate and light chains.</text>
</comment>
<comment type="subcellular location">
    <subcellularLocation>
        <location evidence="7 8">Cytoplasm</location>
        <location evidence="7 8">Cytoskeleton</location>
        <location evidence="7 8">Flagellum axoneme</location>
    </subcellularLocation>
    <subcellularLocation>
        <location evidence="2">Cytoplasm</location>
    </subcellularLocation>
    <text evidence="2">Detected in sperm tail, with almost exclusive localization to the principal piece. Also detected in the cytoplasm of primary spermatocytes.</text>
</comment>
<comment type="alternative products">
    <event type="alternative splicing"/>
    <isoform>
        <id>Q96JB1-1</id>
        <name>1</name>
        <sequence type="displayed"/>
    </isoform>
    <isoform>
        <id>Q96JB1-2</id>
        <name>2</name>
        <sequence type="described" ref="VSP_022614"/>
    </isoform>
    <isoform>
        <id>Q96JB1-3</id>
        <name>3</name>
        <sequence type="not described"/>
    </isoform>
    <isoform>
        <id>Q96JB1-4</id>
        <name>4</name>
        <sequence type="not described"/>
    </isoform>
</comment>
<comment type="tissue specificity">
    <text evidence="7">Expressed in spermatozoa (at protein level). Not detected in airway epithelial cells (at protein level).</text>
</comment>
<comment type="developmental stage">
    <text evidence="7">Expression is detected in the germ cells from the early spermatocyte to late spermatid stages but not in the somatic cells (Leydig, Sertoli cells).</text>
</comment>
<comment type="domain">
    <text>Dynein heavy chains probably consist of an N-terminal stem (which binds cargo and interacts with other dynein components), and the head or motor domain. The motor contains six tandemly-linked AAA domains in the head, which form a ring. A stalk-like structure (formed by two of the coiled coil domains) protrudes between AAA 4 and AAA 5 and terminates in a microtubule-binding site. A seventh domain may also contribute to this ring; it is not clear whether the N-terminus or the C-terminus forms this extra domain. There are four well-conserved and two non-conserved ATPase sites, one per AAA domain. Probably only one of these (within AAA 1) actually hydrolyzes ATP, the others may serve a regulatory function.</text>
</comment>
<comment type="disease" evidence="8 9">
    <disease id="DI-05966">
        <name>Spermatogenic failure 46</name>
        <acronym>SPGF46</acronym>
        <description>An autosomal recessive infertility disorder caused by spermatogenesis defects resulting in asthenoteratozoospermia. SPGF46 is characterized by multiple morphologic abnormalities of sperm flagella with disorganization of axonemal and periaxonemal structures. Flagella are absent, short, coiled, angulated, and/or of irregular caliber.</description>
        <dbReference type="MIM" id="619095"/>
    </disease>
    <text>The disease is caused by variants affecting the gene represented in this entry.</text>
</comment>
<comment type="similarity">
    <text evidence="10">Belongs to the dynein heavy chain family.</text>
</comment>
<reference key="1">
    <citation type="journal article" date="2002" name="Dev. Biol.">
        <title>The T complex distorter 2 candidate gene, Dnahc8, encodes at least two testis-specific axonemal dynein heavy chains that differ extensively at their amino and carboxyl termini.</title>
        <authorList>
            <person name="Samant S.A."/>
            <person name="Ogunkua O."/>
            <person name="Hui L."/>
            <person name="Fossella J."/>
            <person name="Pilder S.H."/>
        </authorList>
    </citation>
    <scope>NUCLEOTIDE SEQUENCE [MRNA] (ISOFORM 1)</scope>
    <scope>ALTERNATIVE SPLICING</scope>
    <scope>VARIANTS VAL-573; GLU-807; LYS-1202 AND VAL-4271</scope>
    <source>
        <tissue>Testis</tissue>
    </source>
</reference>
<reference key="2">
    <citation type="journal article" date="2003" name="Nature">
        <title>The DNA sequence and analysis of human chromosome 6.</title>
        <authorList>
            <person name="Mungall A.J."/>
            <person name="Palmer S.A."/>
            <person name="Sims S.K."/>
            <person name="Edwards C.A."/>
            <person name="Ashurst J.L."/>
            <person name="Wilming L."/>
            <person name="Jones M.C."/>
            <person name="Horton R."/>
            <person name="Hunt S.E."/>
            <person name="Scott C.E."/>
            <person name="Gilbert J.G.R."/>
            <person name="Clamp M.E."/>
            <person name="Bethel G."/>
            <person name="Milne S."/>
            <person name="Ainscough R."/>
            <person name="Almeida J.P."/>
            <person name="Ambrose K.D."/>
            <person name="Andrews T.D."/>
            <person name="Ashwell R.I.S."/>
            <person name="Babbage A.K."/>
            <person name="Bagguley C.L."/>
            <person name="Bailey J."/>
            <person name="Banerjee R."/>
            <person name="Barker D.J."/>
            <person name="Barlow K.F."/>
            <person name="Bates K."/>
            <person name="Beare D.M."/>
            <person name="Beasley H."/>
            <person name="Beasley O."/>
            <person name="Bird C.P."/>
            <person name="Blakey S.E."/>
            <person name="Bray-Allen S."/>
            <person name="Brook J."/>
            <person name="Brown A.J."/>
            <person name="Brown J.Y."/>
            <person name="Burford D.C."/>
            <person name="Burrill W."/>
            <person name="Burton J."/>
            <person name="Carder C."/>
            <person name="Carter N.P."/>
            <person name="Chapman J.C."/>
            <person name="Clark S.Y."/>
            <person name="Clark G."/>
            <person name="Clee C.M."/>
            <person name="Clegg S."/>
            <person name="Cobley V."/>
            <person name="Collier R.E."/>
            <person name="Collins J.E."/>
            <person name="Colman L.K."/>
            <person name="Corby N.R."/>
            <person name="Coville G.J."/>
            <person name="Culley K.M."/>
            <person name="Dhami P."/>
            <person name="Davies J."/>
            <person name="Dunn M."/>
            <person name="Earthrowl M.E."/>
            <person name="Ellington A.E."/>
            <person name="Evans K.A."/>
            <person name="Faulkner L."/>
            <person name="Francis M.D."/>
            <person name="Frankish A."/>
            <person name="Frankland J."/>
            <person name="French L."/>
            <person name="Garner P."/>
            <person name="Garnett J."/>
            <person name="Ghori M.J."/>
            <person name="Gilby L.M."/>
            <person name="Gillson C.J."/>
            <person name="Glithero R.J."/>
            <person name="Grafham D.V."/>
            <person name="Grant M."/>
            <person name="Gribble S."/>
            <person name="Griffiths C."/>
            <person name="Griffiths M.N.D."/>
            <person name="Hall R."/>
            <person name="Halls K.S."/>
            <person name="Hammond S."/>
            <person name="Harley J.L."/>
            <person name="Hart E.A."/>
            <person name="Heath P.D."/>
            <person name="Heathcott R."/>
            <person name="Holmes S.J."/>
            <person name="Howden P.J."/>
            <person name="Howe K.L."/>
            <person name="Howell G.R."/>
            <person name="Huckle E."/>
            <person name="Humphray S.J."/>
            <person name="Humphries M.D."/>
            <person name="Hunt A.R."/>
            <person name="Johnson C.M."/>
            <person name="Joy A.A."/>
            <person name="Kay M."/>
            <person name="Keenan S.J."/>
            <person name="Kimberley A.M."/>
            <person name="King A."/>
            <person name="Laird G.K."/>
            <person name="Langford C."/>
            <person name="Lawlor S."/>
            <person name="Leongamornlert D.A."/>
            <person name="Leversha M."/>
            <person name="Lloyd C.R."/>
            <person name="Lloyd D.M."/>
            <person name="Loveland J.E."/>
            <person name="Lovell J."/>
            <person name="Martin S."/>
            <person name="Mashreghi-Mohammadi M."/>
            <person name="Maslen G.L."/>
            <person name="Matthews L."/>
            <person name="McCann O.T."/>
            <person name="McLaren S.J."/>
            <person name="McLay K."/>
            <person name="McMurray A."/>
            <person name="Moore M.J.F."/>
            <person name="Mullikin J.C."/>
            <person name="Niblett D."/>
            <person name="Nickerson T."/>
            <person name="Novik K.L."/>
            <person name="Oliver K."/>
            <person name="Overton-Larty E.K."/>
            <person name="Parker A."/>
            <person name="Patel R."/>
            <person name="Pearce A.V."/>
            <person name="Peck A.I."/>
            <person name="Phillimore B.J.C.T."/>
            <person name="Phillips S."/>
            <person name="Plumb R.W."/>
            <person name="Porter K.M."/>
            <person name="Ramsey Y."/>
            <person name="Ranby S.A."/>
            <person name="Rice C.M."/>
            <person name="Ross M.T."/>
            <person name="Searle S.M."/>
            <person name="Sehra H.K."/>
            <person name="Sheridan E."/>
            <person name="Skuce C.D."/>
            <person name="Smith S."/>
            <person name="Smith M."/>
            <person name="Spraggon L."/>
            <person name="Squares S.L."/>
            <person name="Steward C.A."/>
            <person name="Sycamore N."/>
            <person name="Tamlyn-Hall G."/>
            <person name="Tester J."/>
            <person name="Theaker A.J."/>
            <person name="Thomas D.W."/>
            <person name="Thorpe A."/>
            <person name="Tracey A."/>
            <person name="Tromans A."/>
            <person name="Tubby B."/>
            <person name="Wall M."/>
            <person name="Wallis J.M."/>
            <person name="West A.P."/>
            <person name="White S.S."/>
            <person name="Whitehead S.L."/>
            <person name="Whittaker H."/>
            <person name="Wild A."/>
            <person name="Willey D.J."/>
            <person name="Wilmer T.E."/>
            <person name="Wood J.M."/>
            <person name="Wray P.W."/>
            <person name="Wyatt J.C."/>
            <person name="Young L."/>
            <person name="Younger R.M."/>
            <person name="Bentley D.R."/>
            <person name="Coulson A."/>
            <person name="Durbin R.M."/>
            <person name="Hubbard T."/>
            <person name="Sulston J.E."/>
            <person name="Dunham I."/>
            <person name="Rogers J."/>
            <person name="Beck S."/>
        </authorList>
    </citation>
    <scope>NUCLEOTIDE SEQUENCE [LARGE SCALE GENOMIC DNA]</scope>
</reference>
<reference key="3">
    <citation type="journal article" date="1997" name="Gene">
        <title>Identification of dynein heavy chain genes expressed in human and mouse testis: chromosomal localization of an axonemal dynein gene.</title>
        <authorList>
            <person name="Neesen J."/>
            <person name="Koehler M.R."/>
            <person name="Kirschner R."/>
            <person name="Steinlein C."/>
            <person name="Kreutzberger J."/>
            <person name="Engel W."/>
            <person name="Schmid M."/>
        </authorList>
    </citation>
    <scope>NUCLEOTIDE SEQUENCE [MRNA] OF 1846-1952 (ISOFORM 1)</scope>
    <source>
        <tissue>Testis</tissue>
    </source>
</reference>
<reference key="4">
    <citation type="submission" date="1999-01" db="EMBL/GenBank/DDBJ databases">
        <title>Chromosomal localization of human dynein heavy chain genes.</title>
        <authorList>
            <person name="Maiti A.K."/>
            <person name="Mattei M.-G."/>
            <person name="Jorissen M."/>
            <person name="Volz A."/>
            <person name="Ziegler A."/>
            <person name="Bouvagnet P."/>
        </authorList>
    </citation>
    <scope>NUCLEOTIDE SEQUENCE [MRNA] OF 1856-1912 (ISOFORM 1)</scope>
    <source>
        <tissue>Nasal polyp</tissue>
    </source>
</reference>
<reference key="5">
    <citation type="journal article" date="2008" name="Mol. Cell">
        <title>Kinase-selective enrichment enables quantitative phosphoproteomics of the kinome across the cell cycle.</title>
        <authorList>
            <person name="Daub H."/>
            <person name="Olsen J.V."/>
            <person name="Bairlein M."/>
            <person name="Gnad F."/>
            <person name="Oppermann F.S."/>
            <person name="Korner R."/>
            <person name="Greff Z."/>
            <person name="Keri G."/>
            <person name="Stemmann O."/>
            <person name="Mann M."/>
        </authorList>
    </citation>
    <scope>PHOSPHORYLATION [LARGE SCALE ANALYSIS] AT SER-674</scope>
    <scope>IDENTIFICATION BY MASS SPECTROMETRY [LARGE SCALE ANALYSIS]</scope>
    <source>
        <tissue>Cervix carcinoma</tissue>
    </source>
</reference>
<reference key="6">
    <citation type="journal article" date="2019" name="Am. J. Hum. Genet.">
        <title>Mutations in DNAH17, Encoding a Sperm-Specific Axonemal Outer Dynein Arm Heavy Chain, Cause Isolated Male Infertility Due to Asthenozoospermia.</title>
        <authorList>
            <person name="Whitfield M."/>
            <person name="Thomas L."/>
            <person name="Bequignon E."/>
            <person name="Schmitt A."/>
            <person name="Stouvenel L."/>
            <person name="Montantin G."/>
            <person name="Tissier S."/>
            <person name="Duquesnoy P."/>
            <person name="Copin B."/>
            <person name="Chantot S."/>
            <person name="Dastot F."/>
            <person name="Faucon C."/>
            <person name="Barbotin A.L."/>
            <person name="Loyens A."/>
            <person name="Siffroi J.P."/>
            <person name="Papon J.F."/>
            <person name="Escudier E."/>
            <person name="Amselem S."/>
            <person name="Mitchell V."/>
            <person name="Toure A."/>
            <person name="Legendre M."/>
        </authorList>
    </citation>
    <scope>TISSUE SPECIFICITY</scope>
    <scope>SUBCELLULAR LOCATION</scope>
    <scope>DEVELOPMENTAL STAGE</scope>
</reference>
<reference key="7">
    <citation type="journal article" date="2020" name="Clin. Genet.">
        <title>Loss-of-function mutation in DNAH8 induces asthenoteratospermia associated with multiple morphological abnormalities of the sperm flagella.</title>
        <authorList>
            <person name="Yang Y."/>
            <person name="Jiang C."/>
            <person name="Zhang X."/>
            <person name="Liu X."/>
            <person name="Li J."/>
            <person name="Qiao X."/>
            <person name="Liu H."/>
            <person name="Shen Y."/>
        </authorList>
    </citation>
    <scope>INVOLVEMENT IN SPGF46</scope>
</reference>
<reference key="8">
    <citation type="journal article" date="2020" name="Am. J. Hum. Genet.">
        <title>Bi-allelic DNAH8 Variants Lead to Multiple Morphological Abnormalities of the Sperm Flagella and Primary Male Infertility.</title>
        <authorList>
            <person name="Liu C."/>
            <person name="Miyata H."/>
            <person name="Gao Y."/>
            <person name="Sha Y."/>
            <person name="Tang S."/>
            <person name="Xu Z."/>
            <person name="Whitfield M."/>
            <person name="Patrat C."/>
            <person name="Wu H."/>
            <person name="Dulioust E."/>
            <person name="Tian S."/>
            <person name="Shimada K."/>
            <person name="Cong J."/>
            <person name="Noda T."/>
            <person name="Li H."/>
            <person name="Morohoshi A."/>
            <person name="Cazin C."/>
            <person name="Kherraf Z.E."/>
            <person name="Arnoult C."/>
            <person name="Jin L."/>
            <person name="He X."/>
            <person name="Ray P.F."/>
            <person name="Cao Y."/>
            <person name="Toure A."/>
            <person name="Zhang F."/>
            <person name="Ikawa M."/>
        </authorList>
    </citation>
    <scope>FUNCTION</scope>
    <scope>SUBCELLULAR LOCATION</scope>
    <scope>VARIANTS SPGF46 ARG-2013; CYS-2926 AND THR-4024</scope>
    <scope>VARIANT MET-3707</scope>
    <scope>INVOLVEMENT IN SPGF46</scope>
</reference>
<reference key="9">
    <citation type="journal article" date="2006" name="Science">
        <title>The consensus coding sequences of human breast and colorectal cancers.</title>
        <authorList>
            <person name="Sjoeblom T."/>
            <person name="Jones S."/>
            <person name="Wood L.D."/>
            <person name="Parsons D.W."/>
            <person name="Lin J."/>
            <person name="Barber T.D."/>
            <person name="Mandelker D."/>
            <person name="Leary R.J."/>
            <person name="Ptak J."/>
            <person name="Silliman N."/>
            <person name="Szabo S."/>
            <person name="Buckhaults P."/>
            <person name="Farrell C."/>
            <person name="Meeh P."/>
            <person name="Markowitz S.D."/>
            <person name="Willis J."/>
            <person name="Dawson D."/>
            <person name="Willson J.K.V."/>
            <person name="Gazdar A.F."/>
            <person name="Hartigan J."/>
            <person name="Wu L."/>
            <person name="Liu C."/>
            <person name="Parmigiani G."/>
            <person name="Park B.H."/>
            <person name="Bachman K.E."/>
            <person name="Papadopoulos N."/>
            <person name="Vogelstein B."/>
            <person name="Kinzler K.W."/>
            <person name="Velculescu V.E."/>
        </authorList>
    </citation>
    <scope>VARIANT [LARGE SCALE ANALYSIS] MET-2226</scope>
</reference>
<reference key="10">
    <citation type="journal article" date="2014" name="Hum. Mutat.">
        <title>Robust diagnostic genetic testing using solution capture enrichment and a novel variant-filtering interface.</title>
        <authorList>
            <person name="Watson C.M."/>
            <person name="Crinnion L.A."/>
            <person name="Morgan J.E."/>
            <person name="Harrison S.M."/>
            <person name="Diggle C.P."/>
            <person name="Adlard J."/>
            <person name="Lindsay H.A."/>
            <person name="Camm N."/>
            <person name="Charlton R."/>
            <person name="Sheridan E."/>
            <person name="Bonthron D.T."/>
            <person name="Taylor G.R."/>
            <person name="Carr I.M."/>
        </authorList>
    </citation>
    <scope>VARIANT 590-ARG--LYS-4490 DEL</scope>
</reference>
<keyword id="KW-0025">Alternative splicing</keyword>
<keyword id="KW-0067">ATP-binding</keyword>
<keyword id="KW-0966">Cell projection</keyword>
<keyword id="KW-0969">Cilium</keyword>
<keyword id="KW-0175">Coiled coil</keyword>
<keyword id="KW-0963">Cytoplasm</keyword>
<keyword id="KW-0206">Cytoskeleton</keyword>
<keyword id="KW-0225">Disease variant</keyword>
<keyword id="KW-0243">Dynein</keyword>
<keyword id="KW-0282">Flagellum</keyword>
<keyword id="KW-0493">Microtubule</keyword>
<keyword id="KW-0505">Motor protein</keyword>
<keyword id="KW-0547">Nucleotide-binding</keyword>
<keyword id="KW-0597">Phosphoprotein</keyword>
<keyword id="KW-1267">Proteomics identification</keyword>
<keyword id="KW-1185">Reference proteome</keyword>
<keyword id="KW-0677">Repeat</keyword>
<organism>
    <name type="scientific">Homo sapiens</name>
    <name type="common">Human</name>
    <dbReference type="NCBI Taxonomy" id="9606"/>
    <lineage>
        <taxon>Eukaryota</taxon>
        <taxon>Metazoa</taxon>
        <taxon>Chordata</taxon>
        <taxon>Craniata</taxon>
        <taxon>Vertebrata</taxon>
        <taxon>Euteleostomi</taxon>
        <taxon>Mammalia</taxon>
        <taxon>Eutheria</taxon>
        <taxon>Euarchontoglires</taxon>
        <taxon>Primates</taxon>
        <taxon>Haplorrhini</taxon>
        <taxon>Catarrhini</taxon>
        <taxon>Hominidae</taxon>
        <taxon>Homo</taxon>
    </lineage>
</organism>
<sequence length="4490" mass="514664">MMKLYIDNAAPDKLKGLCIFFVRCRNDVAINVKTIQEEALFTVLDASKGLLNGIRDMLANIFLPAVLATNNWGALNQSKQGESEKHIFTETINRYLSFLDGARISIEGTVKLKTIDNVNFSKLHTFEEVTAAASNSETVHQLEEVLMVWYKQIEQVLIESEQMRKEAGDSGPLTELEHWKRMSAKFNYIIEQIKGPSCKAVINVLNVAHSKLLKNWRDLDARITDTANESKDNVRYLYTLEKVCQPLYNHDLVSMAHGIQNLINAIRMIHGVSRYYNTSERMTSLFIKVTNQMVTACKAYITDGGLNHVWDQETPVVLKKIQDCIFLFKEYQASFHKTRKLISESSGEKSFEVSEMYIFGKFEAFCKRLEKITEMITVVQTYSTLSNSTIEGIDIMAIKFRNIYQGVKKKQYDILDPRRTEFDTDFLDFMTKINGLEVQIQAFMNSSFGKILSSQQALQLLQRFQKLNIPCLGLEINHTIERILQYYVAELDATKKLYHSQKDDPPLARNMPPIAGKILWVRQLYRRISEPINYFFKNSDILSSPDGKAVIRQYNKISYVLVEFEVVYHTAWIREISQLHYALQATLFVRHPETGKLLVNFDPKILEVVRETKCMIKMKLDVPEQAKRLLKLESKLKADKLYLQGLLQYYDELCQEVPSVFVNLMTPKMKKVESVLRQGLTVLTWSSLTLESFFQEVELVLDMFNQLLKKISDLCEMHIDTVLKEIAKTVLISLPESGATKVEDMLTLNETYTKEWADILNHKSKHVEEAVRELISIFEQIYEVKYTGKVGKQSEQRKHVVFGSETGEGENNDYEANIVNEFDTHDKEDEFKKECKEVFAFFSHQLLDSLQKATRLSLDTMKRRIFVASLYGRKQSEDIISFIKSEVHLAIPNVVMIPSLDDIQQAINRMIQLTLEVSRGVAHWGQQQIRPIKSVIPSPTTTDVTHQNTGKLLKKEERSFEEAIPARKLKNFYPGVAEHKDISKLVLLLSSSVNSLRKAAHEALQDFQKYKTLWTEDRDVKVKEFLANNPSLTEIRSEILHYATFEQEIDELKPIIVVGALELHTEPMKLALSIEAKAWKMLLCRYLNEEYKKKMSYMIAFINEYLKKLSRPIRDLDDVRFAMEALSCIRDNEIQMDMTLGPIEEAYAILNRFEVEVTKEESEAVDTLRYSFNKLQSKAVSVQEDLVQVQPKFKSNLLESVEVFREDVINFAEAYELEGPMVPNIPPQEASNRLQIFQASFDDLWRKFVTYSSGEQLFGLPVTDYEVLHKTRKELNLLQKLYGLYDTVMSSISGYYEILWGDVDIEKINAELLEFQNRCRKLPKGLKDWQAFLDLKKRIDDFSESCPLLEMMTNKAMKQRHWDRISELTGTPFDVESDSFCLRNIMEAPLLKHKDDIEDICISAIKEKDIEAKLTQVIENWTNQNLSFAAFKGKGELLLKGTESGEIITLMEDSLMVLGSLLSNRYNAPFKKNIQNWVYKLSTSSDIIEEWLVVQNLWVYLEAVFVGGDIAKQLPQEAKRFQNIDKSWIKIMQRAHENPNVINCCVGDETMGQLLPHLHEQLEVCQKSLTGYLEKKRLLFPRFFFVSDPVLLEILGQASDSHTIQPHLPAVSDNINEVTFHAKDYDRIMAVISREGEKIVLDNSVMAKGPVEIWLLDLLKMQMSSLHNIIRSAFYQISDSGFQLLPFLSHFPAQVGLLGIQMLWTHDSEEALRNAKDDRKIMQVTNQKFLDILNTLISQTTHDLSKFDRVKFETLITIHVHQRDIFDDLVKMHIKSPTDFEWLKQSRFYFKEDLDQTVVSITDVDFIYQNEFLGCTDRLVITPLTDRCYITLAQALGMNMGGAPAGPAGTGKTETTKDMGRCLGKYVVVFNCSDQMDFRGLGRIFKGLAQSGSWGCFDEFNRIELPVLSVAAQQIYIVLTARKERKKQFIFSDGDCVDLNPEFGIFLTMNPGYAGRQELPENLKIQFRTVAMMVPDRQIIMRVKLASCGFLENVILAQKFYVLYKLCEEQLTKQVHYDFGLRNILSVLRTLGSQKRARPEDSELSIVMRGLRDMNLSKLVDEDEPLFLSLINDLFPGLQLDSNTYAELQNAVAHQVQIEGLINHPPWNLKLVQLYETSLVRHGLMTLGPSGSGKTTVITILMKAQTECGRPHREMRMNPKAITAPQMFGRLDTATNDWTDGIFSTLWRKTLKAKKGENIFLILDGPVDAIWIENLNSVLDDNKTLTLANGDRIPMAPSCKLLFEVHNIENASPATVSRMGMVYISSSALSWRPILQAWLKKRTAQEAAVFLTLYEKVFEDTYTYMKLNLNPKMQLLECNYIVQSLNLLEGLIPSKEEGGVSCVEHLHKLFVFGLMWSLGALLELESREKLEAFLRQHESKLDLPEIPKGSNQTMYEFYVTDYGDWEHWNKKLQPYYYPTDSIPEYSSILVPNVDNIRTNFLIDTIAKQHKAVLLTGEQGTAKTVMVKAYLKKYDPEVQLSKSLNFSSATEPMMFQRTIESYVDKRIGSTYGPPGGRKMTVFIDDINMPVINEWGDQITNEIVRQMMEMEGMYSLDKPGDFTTIVDVQLIAAMIHPGGGRNDIPQRLKRQFTVFNCTLPSNASIDKIFGIIGCGYFDPCRSFKPQICEMIVNLVSVGRVLWQWTKVKMLPTPSKFHYIFNLRDLSRIWQGMLTIKAEECASIPTLLSLFKHECSRVIADRFITPEDEQWFNAHLTRAVEENIGSDAASCILPEPYFVDFLREMPEPTGDEPEDSVFEVPKIYELMPSFDFLAEKLQFYQRQFNEIIRGTSLDLVFFKDAMTHLIKISRIIRTSCGNALLVGVGGSGKQSLSRLASFIAGYQIFQITLTRSYNVTNLTDDLKALYKVAGADGKGITFIFTDSEIKDEAFLEYLNNLLSSGEISNLFARDEMDEITQGLISVMKRELPRHPPTFDNLYEYFISRSRKNLHVVLCFSPVGEKFRARSLKFPGLISGCTMDWFSRWPREALIAVASYFLSDYNIVCSSEIKRQVVETMGLFHDMVSESCESYFQRYRRRAHVTPKSYLSFINGYKNIYAEKVKFINEQAERMNIGLDKLMEASESVAKLSQDLAVKEKELAVASIKADEVLAEVTVSAQASAKIKNEVQEVKDKAQKIVDEIDSEKVKAESKLEAAKPALEEAEAALNTIKPNDIATVRKLAKPPHLIMRIMDCVLLLFQKKIDPVTMDPEKSCCKPSWGESLKLMSATGFLWSLQQFPKDTINEETVELLQPYFNMDDYTFESAKKVCGNVAGLLSWTLAMAIFYGINREVLPLKANLAKQEGRLAVANAELGKAQALLDEKQAELDKVQAKFDAAMNEKMDLLNDADTCRKKMQAASTLIDGLSGEKIRWTQQSKEFKAQINRLVGDILLCTGFLSYLGPFNQIFRNYLLKDQWEMELRARKIPFTENLNLISMLVDPPTIGEWGLQGLPGDDLSIQNGIIVTKATRYPLLIDPQTQGKTWIKSKEKENDLQVTSLNHKYFRTHLEDSLSLGRPLLIEDIHEELDPALDNVLEKNFIKSGTTFKVKVGDKECDIMDTFKLYITTKLPNPAFTPEINAKTSVIDFTVTMKGLENQLLRRVILTEKQELEAERVKLLEDVTFNKRKMKELEDNLLYKLSATKGSLVDDESLIGVLRTTKQTAAEVSEKLHVAAETEIKINAAQEEFRPAATRGSILYFLITEMSMVNIMYQTSLAQFLKLFDQSMARSEKSPLPQKRITNIIEYLTYEVFTYSVRGLYENHKFLFVLLMTLKIDLQRGTVKHREFQALIKGGAALDLKACPPKPYRWILDMTWLNLVELSKLPQFAEIMNQISRNEKGWKSWFDKDAPEEEIIPDGYNDSLDTCHKLLLIRSWCPDRTVFQARKYIADSLEEKYTEPVILNLEKTWEESDTRTPLICFLSMGSDPTNQIDALAKKLKLECRTISMGQGQEVHARKLIQMSMQQGGWVLLQNCHLGLEFMEELLETLITTEASDDSFRVWITTEPHDRFPITLLQTSLKFTNEPPQGVRAGLKRTFAGINQDLLDISNLPMWKPMLYTVAFLHSTVQERRKFGPLGWNIPYEFNSADFSASVQFIQNHLDECDIKKGVSWNTVRYMIGEVQYGGRVTDDFDKRLLNCFARVWFSEKMFEPSFCFYTGYKIPLCKTLDQYFEYIQSLPSLDNPEVFGLHPNADITYQSNTASAVLETITNIQPKESGGGVGETREAIVYRLSEDMLSKLPPDYIPHEVKSRLIKMGHLNSMNIFLRQEIDRMQRVISILRSSLSDLKLAIEGTIIMSENLRDALDNMYDARIPQLWKRVSWDSSTLGFWFTELLERNAQFSTWIFEGRPNVFWMTGFFNPQGFLTAMRQEVTRAHKGWALDTVTIHNEVLRQTKEEITSPPGEGVYIYGLYMDGAAWDRRNGKLMESTPKVLFTQLPVLHIFAINSTAPKDPKLYVCPIYKKPRRTDLTFITVVYLRTVLSPDHWILRGVALLCDIK</sequence>